<keyword id="KW-0028">Amino-acid biosynthesis</keyword>
<keyword id="KW-0100">Branched-chain amino acid biosynthesis</keyword>
<keyword id="KW-0963">Cytoplasm</keyword>
<keyword id="KW-0432">Leucine biosynthesis</keyword>
<keyword id="KW-0464">Manganese</keyword>
<keyword id="KW-0479">Metal-binding</keyword>
<keyword id="KW-0808">Transferase</keyword>
<feature type="chain" id="PRO_1000149206" description="2-isopropylmalate synthase">
    <location>
        <begin position="1"/>
        <end position="515"/>
    </location>
</feature>
<feature type="domain" description="Pyruvate carboxyltransferase" evidence="1">
    <location>
        <begin position="5"/>
        <end position="267"/>
    </location>
</feature>
<feature type="region of interest" description="Regulatory domain" evidence="1">
    <location>
        <begin position="392"/>
        <end position="515"/>
    </location>
</feature>
<feature type="binding site" evidence="1">
    <location>
        <position position="14"/>
    </location>
    <ligand>
        <name>Mn(2+)</name>
        <dbReference type="ChEBI" id="CHEBI:29035"/>
    </ligand>
</feature>
<feature type="binding site" evidence="1">
    <location>
        <position position="202"/>
    </location>
    <ligand>
        <name>Mn(2+)</name>
        <dbReference type="ChEBI" id="CHEBI:29035"/>
    </ligand>
</feature>
<feature type="binding site" evidence="1">
    <location>
        <position position="204"/>
    </location>
    <ligand>
        <name>Mn(2+)</name>
        <dbReference type="ChEBI" id="CHEBI:29035"/>
    </ligand>
</feature>
<feature type="binding site" evidence="1">
    <location>
        <position position="238"/>
    </location>
    <ligand>
        <name>Mn(2+)</name>
        <dbReference type="ChEBI" id="CHEBI:29035"/>
    </ligand>
</feature>
<gene>
    <name evidence="1" type="primary">leuA</name>
    <name type="ordered locus">CGSHiEE_07035</name>
</gene>
<accession>A5UD85</accession>
<reference key="1">
    <citation type="journal article" date="2007" name="Genome Biol.">
        <title>Characterization and modeling of the Haemophilus influenzae core and supragenomes based on the complete genomic sequences of Rd and 12 clinical nontypeable strains.</title>
        <authorList>
            <person name="Hogg J.S."/>
            <person name="Hu F.Z."/>
            <person name="Janto B."/>
            <person name="Boissy R."/>
            <person name="Hayes J."/>
            <person name="Keefe R."/>
            <person name="Post J.C."/>
            <person name="Ehrlich G.D."/>
        </authorList>
    </citation>
    <scope>NUCLEOTIDE SEQUENCE [LARGE SCALE GENOMIC DNA]</scope>
    <source>
        <strain>PittEE</strain>
    </source>
</reference>
<sequence>MTDRVIIFDTTLRDGEQALKASLTVKEKLQIALALERLGVDVMEVGFPVSSQGDFESVQTIARHIKNARVTALSRAVDKDIDAAYEALKVAEAFRIHTFIASSALHVEAKLKRSFDDVVGMAVAAVKRARNYTDDVEFSCEDAGRTGIDNICRIVEAAINAGATTVNIPDTVGFCLPNEYGNIIAQVRNRVPNIDKAVISVHCHNDLGMATANSLTAVQNGARQIECTINGIGERAGNTSLEEVVMAMKVRQDFMGVDTRINTQEIHRVSQMVSQLCNMPIQPNKAIVGSNAFAHSSGIHQDGMLKNKNTYEIMSPETIGLKKEKLNLTARSGRAAVKGHMADMGYNEQDYDLDKLYDAFLKLADKKGQVFDYDLEALAFIDMQQGDEDRLVLDKLSAHSTKEYPATAFVQLKLDGNKLITSSIGGNGPVDAVYNAILNLTGLEIKMSHYNLTAKGEGAEALGQVDIVVEHKGRKFHGVGLATDIVESSALALVHAINAIYRAHKVADIKNHKHH</sequence>
<proteinExistence type="inferred from homology"/>
<name>LEU1_HAEIE</name>
<dbReference type="EC" id="2.3.3.13" evidence="1"/>
<dbReference type="EMBL" id="CP000671">
    <property type="protein sequence ID" value="ABQ98736.1"/>
    <property type="molecule type" value="Genomic_DNA"/>
</dbReference>
<dbReference type="SMR" id="A5UD85"/>
<dbReference type="KEGG" id="hip:CGSHiEE_07035"/>
<dbReference type="HOGENOM" id="CLU_022158_0_1_6"/>
<dbReference type="UniPathway" id="UPA00048">
    <property type="reaction ID" value="UER00070"/>
</dbReference>
<dbReference type="GO" id="GO:0005829">
    <property type="term" value="C:cytosol"/>
    <property type="evidence" value="ECO:0007669"/>
    <property type="project" value="TreeGrafter"/>
</dbReference>
<dbReference type="GO" id="GO:0003852">
    <property type="term" value="F:2-isopropylmalate synthase activity"/>
    <property type="evidence" value="ECO:0007669"/>
    <property type="project" value="UniProtKB-UniRule"/>
</dbReference>
<dbReference type="GO" id="GO:0003985">
    <property type="term" value="F:acetyl-CoA C-acetyltransferase activity"/>
    <property type="evidence" value="ECO:0007669"/>
    <property type="project" value="UniProtKB-UniRule"/>
</dbReference>
<dbReference type="GO" id="GO:0030145">
    <property type="term" value="F:manganese ion binding"/>
    <property type="evidence" value="ECO:0007669"/>
    <property type="project" value="UniProtKB-UniRule"/>
</dbReference>
<dbReference type="GO" id="GO:0009098">
    <property type="term" value="P:L-leucine biosynthetic process"/>
    <property type="evidence" value="ECO:0007669"/>
    <property type="project" value="UniProtKB-UniRule"/>
</dbReference>
<dbReference type="CDD" id="cd07940">
    <property type="entry name" value="DRE_TIM_IPMS"/>
    <property type="match status" value="1"/>
</dbReference>
<dbReference type="FunFam" id="1.10.238.260:FF:000001">
    <property type="entry name" value="2-isopropylmalate synthase"/>
    <property type="match status" value="1"/>
</dbReference>
<dbReference type="FunFam" id="3.20.20.70:FF:000010">
    <property type="entry name" value="2-isopropylmalate synthase"/>
    <property type="match status" value="1"/>
</dbReference>
<dbReference type="FunFam" id="3.30.160.270:FF:000001">
    <property type="entry name" value="2-isopropylmalate synthase"/>
    <property type="match status" value="1"/>
</dbReference>
<dbReference type="Gene3D" id="1.10.238.260">
    <property type="match status" value="1"/>
</dbReference>
<dbReference type="Gene3D" id="3.30.160.270">
    <property type="match status" value="1"/>
</dbReference>
<dbReference type="Gene3D" id="3.20.20.70">
    <property type="entry name" value="Aldolase class I"/>
    <property type="match status" value="1"/>
</dbReference>
<dbReference type="HAMAP" id="MF_01025">
    <property type="entry name" value="LeuA_type1"/>
    <property type="match status" value="1"/>
</dbReference>
<dbReference type="InterPro" id="IPR050073">
    <property type="entry name" value="2-IPM_HCS-like"/>
</dbReference>
<dbReference type="InterPro" id="IPR013709">
    <property type="entry name" value="2-isopropylmalate_synth_dimer"/>
</dbReference>
<dbReference type="InterPro" id="IPR002034">
    <property type="entry name" value="AIPM/Hcit_synth_CS"/>
</dbReference>
<dbReference type="InterPro" id="IPR013785">
    <property type="entry name" value="Aldolase_TIM"/>
</dbReference>
<dbReference type="InterPro" id="IPR054691">
    <property type="entry name" value="LeuA/HCS_post-cat"/>
</dbReference>
<dbReference type="InterPro" id="IPR036230">
    <property type="entry name" value="LeuA_allosteric_dom_sf"/>
</dbReference>
<dbReference type="InterPro" id="IPR005671">
    <property type="entry name" value="LeuA_bact_synth"/>
</dbReference>
<dbReference type="InterPro" id="IPR000891">
    <property type="entry name" value="PYR_CT"/>
</dbReference>
<dbReference type="NCBIfam" id="TIGR00973">
    <property type="entry name" value="leuA_bact"/>
    <property type="match status" value="1"/>
</dbReference>
<dbReference type="NCBIfam" id="NF002084">
    <property type="entry name" value="PRK00915.1-1"/>
    <property type="match status" value="1"/>
</dbReference>
<dbReference type="NCBIfam" id="NF002086">
    <property type="entry name" value="PRK00915.1-3"/>
    <property type="match status" value="1"/>
</dbReference>
<dbReference type="PANTHER" id="PTHR10277:SF9">
    <property type="entry name" value="2-ISOPROPYLMALATE SYNTHASE 1, CHLOROPLASTIC-RELATED"/>
    <property type="match status" value="1"/>
</dbReference>
<dbReference type="PANTHER" id="PTHR10277">
    <property type="entry name" value="HOMOCITRATE SYNTHASE-RELATED"/>
    <property type="match status" value="1"/>
</dbReference>
<dbReference type="Pfam" id="PF22617">
    <property type="entry name" value="HCS_D2"/>
    <property type="match status" value="1"/>
</dbReference>
<dbReference type="Pfam" id="PF00682">
    <property type="entry name" value="HMGL-like"/>
    <property type="match status" value="1"/>
</dbReference>
<dbReference type="Pfam" id="PF08502">
    <property type="entry name" value="LeuA_dimer"/>
    <property type="match status" value="1"/>
</dbReference>
<dbReference type="SMART" id="SM00917">
    <property type="entry name" value="LeuA_dimer"/>
    <property type="match status" value="1"/>
</dbReference>
<dbReference type="SUPFAM" id="SSF110921">
    <property type="entry name" value="2-isopropylmalate synthase LeuA, allosteric (dimerisation) domain"/>
    <property type="match status" value="1"/>
</dbReference>
<dbReference type="SUPFAM" id="SSF51569">
    <property type="entry name" value="Aldolase"/>
    <property type="match status" value="1"/>
</dbReference>
<dbReference type="PROSITE" id="PS00815">
    <property type="entry name" value="AIPM_HOMOCIT_SYNTH_1"/>
    <property type="match status" value="1"/>
</dbReference>
<dbReference type="PROSITE" id="PS00816">
    <property type="entry name" value="AIPM_HOMOCIT_SYNTH_2"/>
    <property type="match status" value="1"/>
</dbReference>
<dbReference type="PROSITE" id="PS50991">
    <property type="entry name" value="PYR_CT"/>
    <property type="match status" value="1"/>
</dbReference>
<organism>
    <name type="scientific">Haemophilus influenzae (strain PittEE)</name>
    <dbReference type="NCBI Taxonomy" id="374930"/>
    <lineage>
        <taxon>Bacteria</taxon>
        <taxon>Pseudomonadati</taxon>
        <taxon>Pseudomonadota</taxon>
        <taxon>Gammaproteobacteria</taxon>
        <taxon>Pasteurellales</taxon>
        <taxon>Pasteurellaceae</taxon>
        <taxon>Haemophilus</taxon>
    </lineage>
</organism>
<evidence type="ECO:0000255" key="1">
    <source>
        <dbReference type="HAMAP-Rule" id="MF_01025"/>
    </source>
</evidence>
<protein>
    <recommendedName>
        <fullName evidence="1">2-isopropylmalate synthase</fullName>
        <ecNumber evidence="1">2.3.3.13</ecNumber>
    </recommendedName>
    <alternativeName>
        <fullName evidence="1">Alpha-IPM synthase</fullName>
    </alternativeName>
    <alternativeName>
        <fullName evidence="1">Alpha-isopropylmalate synthase</fullName>
    </alternativeName>
</protein>
<comment type="function">
    <text evidence="1">Catalyzes the condensation of the acetyl group of acetyl-CoA with 3-methyl-2-oxobutanoate (2-ketoisovalerate) to form 3-carboxy-3-hydroxy-4-methylpentanoate (2-isopropylmalate).</text>
</comment>
<comment type="catalytic activity">
    <reaction evidence="1">
        <text>3-methyl-2-oxobutanoate + acetyl-CoA + H2O = (2S)-2-isopropylmalate + CoA + H(+)</text>
        <dbReference type="Rhea" id="RHEA:21524"/>
        <dbReference type="ChEBI" id="CHEBI:1178"/>
        <dbReference type="ChEBI" id="CHEBI:11851"/>
        <dbReference type="ChEBI" id="CHEBI:15377"/>
        <dbReference type="ChEBI" id="CHEBI:15378"/>
        <dbReference type="ChEBI" id="CHEBI:57287"/>
        <dbReference type="ChEBI" id="CHEBI:57288"/>
        <dbReference type="EC" id="2.3.3.13"/>
    </reaction>
</comment>
<comment type="cofactor">
    <cofactor evidence="1">
        <name>Mn(2+)</name>
        <dbReference type="ChEBI" id="CHEBI:29035"/>
    </cofactor>
</comment>
<comment type="pathway">
    <text evidence="1">Amino-acid biosynthesis; L-leucine biosynthesis; L-leucine from 3-methyl-2-oxobutanoate: step 1/4.</text>
</comment>
<comment type="subunit">
    <text evidence="1">Homodimer.</text>
</comment>
<comment type="subcellular location">
    <subcellularLocation>
        <location evidence="1">Cytoplasm</location>
    </subcellularLocation>
</comment>
<comment type="similarity">
    <text evidence="1">Belongs to the alpha-IPM synthase/homocitrate synthase family. LeuA type 1 subfamily.</text>
</comment>